<gene>
    <name type="primary">ryh1</name>
    <name type="synonym">hos1</name>
    <name type="synonym">its6</name>
    <name type="ORF">SPAC4C5.02c</name>
</gene>
<keyword id="KW-0963">Cytoplasm</keyword>
<keyword id="KW-0967">Endosome</keyword>
<keyword id="KW-0333">Golgi apparatus</keyword>
<keyword id="KW-0342">GTP-binding</keyword>
<keyword id="KW-0449">Lipoprotein</keyword>
<keyword id="KW-0472">Membrane</keyword>
<keyword id="KW-0488">Methylation</keyword>
<keyword id="KW-0547">Nucleotide-binding</keyword>
<keyword id="KW-0539">Nucleus</keyword>
<keyword id="KW-0636">Prenylation</keyword>
<keyword id="KW-0653">Protein transport</keyword>
<keyword id="KW-1185">Reference proteome</keyword>
<keyword id="KW-0813">Transport</keyword>
<name>RYH1_SCHPO</name>
<feature type="chain" id="PRO_0000121307" description="GTP-binding protein ryh1">
    <location>
        <begin position="1"/>
        <end position="201"/>
    </location>
</feature>
<feature type="short sequence motif" description="Effector region" evidence="4">
    <location>
        <begin position="40"/>
        <end position="48"/>
    </location>
</feature>
<feature type="binding site" evidence="1">
    <location>
        <begin position="18"/>
        <end position="25"/>
    </location>
    <ligand>
        <name>GTP</name>
        <dbReference type="ChEBI" id="CHEBI:37565"/>
    </ligand>
</feature>
<feature type="binding site" evidence="1">
    <location>
        <begin position="66"/>
        <end position="70"/>
    </location>
    <ligand>
        <name>GTP</name>
        <dbReference type="ChEBI" id="CHEBI:37565"/>
    </ligand>
</feature>
<feature type="binding site" evidence="1">
    <location>
        <begin position="124"/>
        <end position="127"/>
    </location>
    <ligand>
        <name>GTP</name>
        <dbReference type="ChEBI" id="CHEBI:37565"/>
    </ligand>
</feature>
<feature type="modified residue" description="Cysteine methyl ester" evidence="1">
    <location>
        <position position="201"/>
    </location>
</feature>
<feature type="lipid moiety-binding region" description="S-geranylgeranyl cysteine" evidence="1">
    <location>
        <position position="199"/>
    </location>
</feature>
<feature type="lipid moiety-binding region" description="S-geranylgeranyl cysteine" evidence="1">
    <location>
        <position position="201"/>
    </location>
</feature>
<feature type="mutagenesis site" description="Growth inhibited in ypt3-i5 mutant cells; no effect on wild-type cells." evidence="2">
    <original>T</original>
    <variation>N</variation>
    <location>
        <position position="25"/>
    </location>
</feature>
<feature type="mutagenesis site" description="Growth inhibited in wild-type cells; localizes to the plasma membrane." evidence="2">
    <original>Q</original>
    <variation>L</variation>
    <location>
        <position position="70"/>
    </location>
</feature>
<comment type="function">
    <text evidence="2">Has a role in retrograde traffricking of proteins from the endosome to the Golgi. Involved in protein transport to the plasma membrane. Involved in the secretory pathway where it has a role in acid phosphatase secretion. Required also in normal glycosylation trafficking pathways.</text>
</comment>
<comment type="subcellular location">
    <subcellularLocation>
        <location evidence="2">Endosome membrane</location>
        <topology evidence="4">Lipid-anchor</topology>
    </subcellularLocation>
    <subcellularLocation>
        <location evidence="2">Golgi apparatus membrane</location>
        <topology evidence="4">Lipid-anchor</topology>
    </subcellularLocation>
    <subcellularLocation>
        <location evidence="3">Nucleus</location>
    </subcellularLocation>
    <subcellularLocation>
        <location evidence="3">Cytoplasm</location>
        <location evidence="3">Cytosol</location>
    </subcellularLocation>
</comment>
<comment type="similarity">
    <text evidence="4">Belongs to the small GTPase superfamily. Rab family.</text>
</comment>
<protein>
    <recommendedName>
        <fullName>GTP-binding protein ryh1</fullName>
    </recommendedName>
</protein>
<organism>
    <name type="scientific">Schizosaccharomyces pombe (strain 972 / ATCC 24843)</name>
    <name type="common">Fission yeast</name>
    <dbReference type="NCBI Taxonomy" id="284812"/>
    <lineage>
        <taxon>Eukaryota</taxon>
        <taxon>Fungi</taxon>
        <taxon>Dikarya</taxon>
        <taxon>Ascomycota</taxon>
        <taxon>Taphrinomycotina</taxon>
        <taxon>Schizosaccharomycetes</taxon>
        <taxon>Schizosaccharomycetales</taxon>
        <taxon>Schizosaccharomycetaceae</taxon>
        <taxon>Schizosaccharomyces</taxon>
    </lineage>
</organism>
<accession>P17608</accession>
<dbReference type="EMBL" id="X52475">
    <property type="protein sequence ID" value="CAA36715.1"/>
    <property type="molecule type" value="Genomic_DNA"/>
</dbReference>
<dbReference type="EMBL" id="CU329670">
    <property type="protein sequence ID" value="CAB11173.1"/>
    <property type="molecule type" value="Genomic_DNA"/>
</dbReference>
<dbReference type="PIR" id="S12789">
    <property type="entry name" value="S12789"/>
</dbReference>
<dbReference type="RefSeq" id="NP_593249.1">
    <property type="nucleotide sequence ID" value="NM_001018646.2"/>
</dbReference>
<dbReference type="SMR" id="P17608"/>
<dbReference type="BioGRID" id="279947">
    <property type="interactions" value="166"/>
</dbReference>
<dbReference type="FunCoup" id="P17608">
    <property type="interactions" value="371"/>
</dbReference>
<dbReference type="STRING" id="284812.P17608"/>
<dbReference type="iPTMnet" id="P17608"/>
<dbReference type="PaxDb" id="4896-SPAC4C5.02c.1"/>
<dbReference type="EnsemblFungi" id="SPAC4C5.02c.1">
    <property type="protein sequence ID" value="SPAC4C5.02c.1:pep"/>
    <property type="gene ID" value="SPAC4C5.02c"/>
</dbReference>
<dbReference type="GeneID" id="2543529"/>
<dbReference type="KEGG" id="spo:2543529"/>
<dbReference type="PomBase" id="SPAC4C5.02c">
    <property type="gene designation" value="ryh1"/>
</dbReference>
<dbReference type="VEuPathDB" id="FungiDB:SPAC4C5.02c"/>
<dbReference type="eggNOG" id="KOG0094">
    <property type="taxonomic scope" value="Eukaryota"/>
</dbReference>
<dbReference type="HOGENOM" id="CLU_041217_10_2_1"/>
<dbReference type="InParanoid" id="P17608"/>
<dbReference type="OMA" id="PVSNDGC"/>
<dbReference type="PhylomeDB" id="P17608"/>
<dbReference type="Reactome" id="R-SPO-6798695">
    <property type="pathway name" value="Neutrophil degranulation"/>
</dbReference>
<dbReference type="Reactome" id="R-SPO-6811440">
    <property type="pathway name" value="Retrograde transport at the Trans-Golgi-Network"/>
</dbReference>
<dbReference type="Reactome" id="R-SPO-8873719">
    <property type="pathway name" value="RAB geranylgeranylation"/>
</dbReference>
<dbReference type="Reactome" id="R-SPO-8876198">
    <property type="pathway name" value="RAB GEFs exchange GTP for GDP on RABs"/>
</dbReference>
<dbReference type="PRO" id="PR:P17608"/>
<dbReference type="Proteomes" id="UP000002485">
    <property type="component" value="Chromosome I"/>
</dbReference>
<dbReference type="GO" id="GO:0005829">
    <property type="term" value="C:cytosol"/>
    <property type="evidence" value="ECO:0007005"/>
    <property type="project" value="PomBase"/>
</dbReference>
<dbReference type="GO" id="GO:0012505">
    <property type="term" value="C:endomembrane system"/>
    <property type="evidence" value="ECO:0000318"/>
    <property type="project" value="GO_Central"/>
</dbReference>
<dbReference type="GO" id="GO:0010008">
    <property type="term" value="C:endosome membrane"/>
    <property type="evidence" value="ECO:0007669"/>
    <property type="project" value="UniProtKB-SubCell"/>
</dbReference>
<dbReference type="GO" id="GO:0005794">
    <property type="term" value="C:Golgi apparatus"/>
    <property type="evidence" value="ECO:0000318"/>
    <property type="project" value="GO_Central"/>
</dbReference>
<dbReference type="GO" id="GO:0000139">
    <property type="term" value="C:Golgi membrane"/>
    <property type="evidence" value="ECO:0007669"/>
    <property type="project" value="UniProtKB-SubCell"/>
</dbReference>
<dbReference type="GO" id="GO:0005634">
    <property type="term" value="C:nucleus"/>
    <property type="evidence" value="ECO:0007005"/>
    <property type="project" value="PomBase"/>
</dbReference>
<dbReference type="GO" id="GO:0005525">
    <property type="term" value="F:GTP binding"/>
    <property type="evidence" value="ECO:0000314"/>
    <property type="project" value="PomBase"/>
</dbReference>
<dbReference type="GO" id="GO:0003924">
    <property type="term" value="F:GTPase activity"/>
    <property type="evidence" value="ECO:0000314"/>
    <property type="project" value="PomBase"/>
</dbReference>
<dbReference type="GO" id="GO:0019887">
    <property type="term" value="F:protein kinase regulator activity"/>
    <property type="evidence" value="ECO:0000269"/>
    <property type="project" value="PomBase"/>
</dbReference>
<dbReference type="GO" id="GO:0006891">
    <property type="term" value="P:intra-Golgi vesicle-mediated transport"/>
    <property type="evidence" value="ECO:0000318"/>
    <property type="project" value="GO_Central"/>
</dbReference>
<dbReference type="GO" id="GO:0006886">
    <property type="term" value="P:intracellular protein transport"/>
    <property type="evidence" value="ECO:0000318"/>
    <property type="project" value="GO_Central"/>
</dbReference>
<dbReference type="GO" id="GO:1904515">
    <property type="term" value="P:positive regulation of TORC2 signaling"/>
    <property type="evidence" value="ECO:0000315"/>
    <property type="project" value="PomBase"/>
</dbReference>
<dbReference type="GO" id="GO:0034497">
    <property type="term" value="P:protein localization to phagophore assembly site"/>
    <property type="evidence" value="ECO:0000318"/>
    <property type="project" value="GO_Central"/>
</dbReference>
<dbReference type="GO" id="GO:0042147">
    <property type="term" value="P:retrograde transport, endosome to Golgi"/>
    <property type="evidence" value="ECO:0000318"/>
    <property type="project" value="GO_Central"/>
</dbReference>
<dbReference type="GO" id="GO:0006890">
    <property type="term" value="P:retrograde vesicle-mediated transport, Golgi to endoplasmic reticulum"/>
    <property type="evidence" value="ECO:0000318"/>
    <property type="project" value="GO_Central"/>
</dbReference>
<dbReference type="CDD" id="cd01861">
    <property type="entry name" value="Rab6"/>
    <property type="match status" value="1"/>
</dbReference>
<dbReference type="FunFam" id="3.40.50.300:FF:000229">
    <property type="entry name" value="Probable Ras-related protein Rab-6A"/>
    <property type="match status" value="1"/>
</dbReference>
<dbReference type="Gene3D" id="3.40.50.300">
    <property type="entry name" value="P-loop containing nucleotide triphosphate hydrolases"/>
    <property type="match status" value="1"/>
</dbReference>
<dbReference type="InterPro" id="IPR027417">
    <property type="entry name" value="P-loop_NTPase"/>
</dbReference>
<dbReference type="InterPro" id="IPR050227">
    <property type="entry name" value="Rab"/>
</dbReference>
<dbReference type="InterPro" id="IPR005225">
    <property type="entry name" value="Small_GTP-bd"/>
</dbReference>
<dbReference type="InterPro" id="IPR001806">
    <property type="entry name" value="Small_GTPase"/>
</dbReference>
<dbReference type="NCBIfam" id="TIGR00231">
    <property type="entry name" value="small_GTP"/>
    <property type="match status" value="1"/>
</dbReference>
<dbReference type="PANTHER" id="PTHR47977">
    <property type="entry name" value="RAS-RELATED PROTEIN RAB"/>
    <property type="match status" value="1"/>
</dbReference>
<dbReference type="Pfam" id="PF00071">
    <property type="entry name" value="Ras"/>
    <property type="match status" value="1"/>
</dbReference>
<dbReference type="PRINTS" id="PR00449">
    <property type="entry name" value="RASTRNSFRMNG"/>
</dbReference>
<dbReference type="SMART" id="SM00175">
    <property type="entry name" value="RAB"/>
    <property type="match status" value="1"/>
</dbReference>
<dbReference type="SMART" id="SM00176">
    <property type="entry name" value="RAN"/>
    <property type="match status" value="1"/>
</dbReference>
<dbReference type="SMART" id="SM00173">
    <property type="entry name" value="RAS"/>
    <property type="match status" value="1"/>
</dbReference>
<dbReference type="SMART" id="SM00174">
    <property type="entry name" value="RHO"/>
    <property type="match status" value="1"/>
</dbReference>
<dbReference type="SUPFAM" id="SSF52540">
    <property type="entry name" value="P-loop containing nucleoside triphosphate hydrolases"/>
    <property type="match status" value="1"/>
</dbReference>
<dbReference type="PROSITE" id="PS51419">
    <property type="entry name" value="RAB"/>
    <property type="match status" value="1"/>
</dbReference>
<sequence>MSENYSFSLRKFKLVFLGEQSVGKTSLITRFMYDQFDNTYQATIGIDFLSKTMYLEDRTVRLQLWDTAGQERFRSLIPSYIRDSSVAIIVYDITNHNSFVNTEKWIEDVRAERGDDVIIVLVGNKTDLADKRQVTQEEGEKKAKELKIMHMETSAKAGHNVKLLFRKIAQMLPGMENVETQSTQMIDVSIQPNENESSCNC</sequence>
<reference key="1">
    <citation type="journal article" date="1990" name="EMBO J.">
        <title>The ryh1 gene in the fission yeast Schizosaccharomyces pombe encoding a GTP-binding protein related to ras, rho and ypt: structure, expression and identification of its human homologue.</title>
        <authorList>
            <person name="Hengst L."/>
            <person name="Lehmeier T."/>
            <person name="Gallwitz D."/>
        </authorList>
    </citation>
    <scope>NUCLEOTIDE SEQUENCE [GENOMIC DNA]</scope>
    <source>
        <strain>972 / ATCC 24843</strain>
    </source>
</reference>
<reference key="2">
    <citation type="journal article" date="2006" name="Genes Cells">
        <title>Genetic and functional interaction between Ryh1 and Ypt3: two Rab GTPases that function in S. pombe secretory pathway.</title>
        <authorList>
            <person name="He Y."/>
            <person name="Sugiura R."/>
            <person name="Ma Y."/>
            <person name="Kita A."/>
            <person name="Deng L."/>
            <person name="Takegawa K."/>
            <person name="Matsuoka K."/>
            <person name="Shuntoh H."/>
            <person name="Kuno T."/>
        </authorList>
    </citation>
    <scope>NUCLEOTIDE SEQUENCE [GENOMIC DNA]</scope>
    <scope>FUNCTION</scope>
    <scope>SUBCELLULAR LOCATION</scope>
    <scope>MUTAGENESIS OF THR-25 AND GLN-70</scope>
</reference>
<reference key="3">
    <citation type="journal article" date="2002" name="Nature">
        <title>The genome sequence of Schizosaccharomyces pombe.</title>
        <authorList>
            <person name="Wood V."/>
            <person name="Gwilliam R."/>
            <person name="Rajandream M.A."/>
            <person name="Lyne M.H."/>
            <person name="Lyne R."/>
            <person name="Stewart A."/>
            <person name="Sgouros J.G."/>
            <person name="Peat N."/>
            <person name="Hayles J."/>
            <person name="Baker S.G."/>
            <person name="Basham D."/>
            <person name="Bowman S."/>
            <person name="Brooks K."/>
            <person name="Brown D."/>
            <person name="Brown S."/>
            <person name="Chillingworth T."/>
            <person name="Churcher C.M."/>
            <person name="Collins M."/>
            <person name="Connor R."/>
            <person name="Cronin A."/>
            <person name="Davis P."/>
            <person name="Feltwell T."/>
            <person name="Fraser A."/>
            <person name="Gentles S."/>
            <person name="Goble A."/>
            <person name="Hamlin N."/>
            <person name="Harris D.E."/>
            <person name="Hidalgo J."/>
            <person name="Hodgson G."/>
            <person name="Holroyd S."/>
            <person name="Hornsby T."/>
            <person name="Howarth S."/>
            <person name="Huckle E.J."/>
            <person name="Hunt S."/>
            <person name="Jagels K."/>
            <person name="James K.D."/>
            <person name="Jones L."/>
            <person name="Jones M."/>
            <person name="Leather S."/>
            <person name="McDonald S."/>
            <person name="McLean J."/>
            <person name="Mooney P."/>
            <person name="Moule S."/>
            <person name="Mungall K.L."/>
            <person name="Murphy L.D."/>
            <person name="Niblett D."/>
            <person name="Odell C."/>
            <person name="Oliver K."/>
            <person name="O'Neil S."/>
            <person name="Pearson D."/>
            <person name="Quail M.A."/>
            <person name="Rabbinowitsch E."/>
            <person name="Rutherford K.M."/>
            <person name="Rutter S."/>
            <person name="Saunders D."/>
            <person name="Seeger K."/>
            <person name="Sharp S."/>
            <person name="Skelton J."/>
            <person name="Simmonds M.N."/>
            <person name="Squares R."/>
            <person name="Squares S."/>
            <person name="Stevens K."/>
            <person name="Taylor K."/>
            <person name="Taylor R.G."/>
            <person name="Tivey A."/>
            <person name="Walsh S.V."/>
            <person name="Warren T."/>
            <person name="Whitehead S."/>
            <person name="Woodward J.R."/>
            <person name="Volckaert G."/>
            <person name="Aert R."/>
            <person name="Robben J."/>
            <person name="Grymonprez B."/>
            <person name="Weltjens I."/>
            <person name="Vanstreels E."/>
            <person name="Rieger M."/>
            <person name="Schaefer M."/>
            <person name="Mueller-Auer S."/>
            <person name="Gabel C."/>
            <person name="Fuchs M."/>
            <person name="Duesterhoeft A."/>
            <person name="Fritzc C."/>
            <person name="Holzer E."/>
            <person name="Moestl D."/>
            <person name="Hilbert H."/>
            <person name="Borzym K."/>
            <person name="Langer I."/>
            <person name="Beck A."/>
            <person name="Lehrach H."/>
            <person name="Reinhardt R."/>
            <person name="Pohl T.M."/>
            <person name="Eger P."/>
            <person name="Zimmermann W."/>
            <person name="Wedler H."/>
            <person name="Wambutt R."/>
            <person name="Purnelle B."/>
            <person name="Goffeau A."/>
            <person name="Cadieu E."/>
            <person name="Dreano S."/>
            <person name="Gloux S."/>
            <person name="Lelaure V."/>
            <person name="Mottier S."/>
            <person name="Galibert F."/>
            <person name="Aves S.J."/>
            <person name="Xiang Z."/>
            <person name="Hunt C."/>
            <person name="Moore K."/>
            <person name="Hurst S.M."/>
            <person name="Lucas M."/>
            <person name="Rochet M."/>
            <person name="Gaillardin C."/>
            <person name="Tallada V.A."/>
            <person name="Garzon A."/>
            <person name="Thode G."/>
            <person name="Daga R.R."/>
            <person name="Cruzado L."/>
            <person name="Jimenez J."/>
            <person name="Sanchez M."/>
            <person name="del Rey F."/>
            <person name="Benito J."/>
            <person name="Dominguez A."/>
            <person name="Revuelta J.L."/>
            <person name="Moreno S."/>
            <person name="Armstrong J."/>
            <person name="Forsburg S.L."/>
            <person name="Cerutti L."/>
            <person name="Lowe T."/>
            <person name="McCombie W.R."/>
            <person name="Paulsen I."/>
            <person name="Potashkin J."/>
            <person name="Shpakovski G.V."/>
            <person name="Ussery D."/>
            <person name="Barrell B.G."/>
            <person name="Nurse P."/>
        </authorList>
    </citation>
    <scope>NUCLEOTIDE SEQUENCE [LARGE SCALE GENOMIC DNA]</scope>
    <source>
        <strain>972 / ATCC 24843</strain>
    </source>
</reference>
<reference key="4">
    <citation type="journal article" date="2006" name="Nat. Biotechnol.">
        <title>ORFeome cloning and global analysis of protein localization in the fission yeast Schizosaccharomyces pombe.</title>
        <authorList>
            <person name="Matsuyama A."/>
            <person name="Arai R."/>
            <person name="Yashiroda Y."/>
            <person name="Shirai A."/>
            <person name="Kamata A."/>
            <person name="Sekido S."/>
            <person name="Kobayashi Y."/>
            <person name="Hashimoto A."/>
            <person name="Hamamoto M."/>
            <person name="Hiraoka Y."/>
            <person name="Horinouchi S."/>
            <person name="Yoshida M."/>
        </authorList>
    </citation>
    <scope>SUBCELLULAR LOCATION [LARGE SCALE ANALYSIS]</scope>
</reference>
<proteinExistence type="evidence at protein level"/>
<evidence type="ECO:0000250" key="1"/>
<evidence type="ECO:0000269" key="2">
    <source>
    </source>
</evidence>
<evidence type="ECO:0000269" key="3">
    <source>
    </source>
</evidence>
<evidence type="ECO:0000305" key="4"/>